<reference key="1">
    <citation type="journal article" date="2008" name="Foodborne Pathog. Dis.">
        <title>The complete genome sequence and analysis of the human pathogen Campylobacter lari.</title>
        <authorList>
            <person name="Miller W.G."/>
            <person name="Wang G."/>
            <person name="Binnewies T.T."/>
            <person name="Parker C.T."/>
        </authorList>
    </citation>
    <scope>NUCLEOTIDE SEQUENCE [LARGE SCALE GENOMIC DNA]</scope>
    <source>
        <strain>RM2100 / D67 / ATCC BAA-1060</strain>
    </source>
</reference>
<keyword id="KW-0021">Allosteric enzyme</keyword>
<keyword id="KW-0963">Cytoplasm</keyword>
<keyword id="KW-0378">Hydrolase</keyword>
<keyword id="KW-0479">Metal-binding</keyword>
<keyword id="KW-0645">Protease</keyword>
<keyword id="KW-1185">Reference proteome</keyword>
<keyword id="KW-0915">Sodium</keyword>
<keyword id="KW-0346">Stress response</keyword>
<keyword id="KW-0888">Threonine protease</keyword>
<dbReference type="EC" id="3.4.25.2" evidence="1"/>
<dbReference type="EMBL" id="CP000932">
    <property type="protein sequence ID" value="ACM64084.1"/>
    <property type="molecule type" value="Genomic_DNA"/>
</dbReference>
<dbReference type="RefSeq" id="WP_012661467.1">
    <property type="nucleotide sequence ID" value="NC_012039.1"/>
</dbReference>
<dbReference type="SMR" id="B9KG99"/>
<dbReference type="STRING" id="306263.Cla_0756"/>
<dbReference type="KEGG" id="cla:CLA_0756"/>
<dbReference type="PATRIC" id="fig|306263.5.peg.736"/>
<dbReference type="eggNOG" id="COG5405">
    <property type="taxonomic scope" value="Bacteria"/>
</dbReference>
<dbReference type="HOGENOM" id="CLU_093872_1_1_7"/>
<dbReference type="Proteomes" id="UP000007727">
    <property type="component" value="Chromosome"/>
</dbReference>
<dbReference type="GO" id="GO:0009376">
    <property type="term" value="C:HslUV protease complex"/>
    <property type="evidence" value="ECO:0007669"/>
    <property type="project" value="UniProtKB-UniRule"/>
</dbReference>
<dbReference type="GO" id="GO:0005839">
    <property type="term" value="C:proteasome core complex"/>
    <property type="evidence" value="ECO:0007669"/>
    <property type="project" value="InterPro"/>
</dbReference>
<dbReference type="GO" id="GO:0046872">
    <property type="term" value="F:metal ion binding"/>
    <property type="evidence" value="ECO:0007669"/>
    <property type="project" value="UniProtKB-KW"/>
</dbReference>
<dbReference type="GO" id="GO:0004298">
    <property type="term" value="F:threonine-type endopeptidase activity"/>
    <property type="evidence" value="ECO:0007669"/>
    <property type="project" value="UniProtKB-KW"/>
</dbReference>
<dbReference type="GO" id="GO:0051603">
    <property type="term" value="P:proteolysis involved in protein catabolic process"/>
    <property type="evidence" value="ECO:0007669"/>
    <property type="project" value="InterPro"/>
</dbReference>
<dbReference type="CDD" id="cd01913">
    <property type="entry name" value="protease_HslV"/>
    <property type="match status" value="1"/>
</dbReference>
<dbReference type="Gene3D" id="3.60.20.10">
    <property type="entry name" value="Glutamine Phosphoribosylpyrophosphate, subunit 1, domain 1"/>
    <property type="match status" value="1"/>
</dbReference>
<dbReference type="HAMAP" id="MF_00248">
    <property type="entry name" value="HslV"/>
    <property type="match status" value="1"/>
</dbReference>
<dbReference type="InterPro" id="IPR022281">
    <property type="entry name" value="ATP-dep_Prtase_HsIV_su"/>
</dbReference>
<dbReference type="InterPro" id="IPR029055">
    <property type="entry name" value="Ntn_hydrolases_N"/>
</dbReference>
<dbReference type="InterPro" id="IPR001353">
    <property type="entry name" value="Proteasome_sua/b"/>
</dbReference>
<dbReference type="InterPro" id="IPR023333">
    <property type="entry name" value="Proteasome_suB-type"/>
</dbReference>
<dbReference type="NCBIfam" id="TIGR03692">
    <property type="entry name" value="ATP_dep_HslV"/>
    <property type="match status" value="1"/>
</dbReference>
<dbReference type="NCBIfam" id="NF003964">
    <property type="entry name" value="PRK05456.1"/>
    <property type="match status" value="1"/>
</dbReference>
<dbReference type="PANTHER" id="PTHR32194:SF0">
    <property type="entry name" value="ATP-DEPENDENT PROTEASE SUBUNIT HSLV"/>
    <property type="match status" value="1"/>
</dbReference>
<dbReference type="PANTHER" id="PTHR32194">
    <property type="entry name" value="METALLOPROTEASE TLDD"/>
    <property type="match status" value="1"/>
</dbReference>
<dbReference type="Pfam" id="PF00227">
    <property type="entry name" value="Proteasome"/>
    <property type="match status" value="1"/>
</dbReference>
<dbReference type="PIRSF" id="PIRSF039093">
    <property type="entry name" value="HslV"/>
    <property type="match status" value="1"/>
</dbReference>
<dbReference type="SUPFAM" id="SSF56235">
    <property type="entry name" value="N-terminal nucleophile aminohydrolases (Ntn hydrolases)"/>
    <property type="match status" value="1"/>
</dbReference>
<dbReference type="PROSITE" id="PS51476">
    <property type="entry name" value="PROTEASOME_BETA_2"/>
    <property type="match status" value="1"/>
</dbReference>
<evidence type="ECO:0000255" key="1">
    <source>
        <dbReference type="HAMAP-Rule" id="MF_00248"/>
    </source>
</evidence>
<comment type="function">
    <text evidence="1">Protease subunit of a proteasome-like degradation complex believed to be a general protein degrading machinery.</text>
</comment>
<comment type="catalytic activity">
    <reaction evidence="1">
        <text>ATP-dependent cleavage of peptide bonds with broad specificity.</text>
        <dbReference type="EC" id="3.4.25.2"/>
    </reaction>
</comment>
<comment type="activity regulation">
    <text evidence="1">Allosterically activated by HslU binding.</text>
</comment>
<comment type="subunit">
    <text evidence="1">A double ring-shaped homohexamer of HslV is capped on each side by a ring-shaped HslU homohexamer. The assembly of the HslU/HslV complex is dependent on binding of ATP.</text>
</comment>
<comment type="subcellular location">
    <subcellularLocation>
        <location evidence="1">Cytoplasm</location>
    </subcellularLocation>
</comment>
<comment type="similarity">
    <text evidence="1">Belongs to the peptidase T1B family. HslV subfamily.</text>
</comment>
<sequence>MFHATTILAYKGKNKSVIGGDGQVSFGNTVLKNNAVKIRKLNNGKVLAGFAGSTADAFNLFDMFEKLLSSSKGDLLKAAIDFSKEWRKDKYLRKLEAMMLVLDRNHIFLLSGTGDVVEPEDGAIAAIGSGGNYALSAARALAKHSNLDEENLVKESLQIAGEICIYTNTNIKTYVIEDDK</sequence>
<gene>
    <name evidence="1" type="primary">hslV</name>
    <name type="ordered locus">Cla_0756</name>
</gene>
<name>HSLV_CAMLR</name>
<accession>B9KG99</accession>
<proteinExistence type="inferred from homology"/>
<feature type="chain" id="PRO_1000125402" description="ATP-dependent protease subunit HslV">
    <location>
        <begin position="1"/>
        <end position="180"/>
    </location>
</feature>
<feature type="active site" evidence="1">
    <location>
        <position position="5"/>
    </location>
</feature>
<feature type="binding site" evidence="1">
    <location>
        <position position="161"/>
    </location>
    <ligand>
        <name>Na(+)</name>
        <dbReference type="ChEBI" id="CHEBI:29101"/>
    </ligand>
</feature>
<feature type="binding site" evidence="1">
    <location>
        <position position="164"/>
    </location>
    <ligand>
        <name>Na(+)</name>
        <dbReference type="ChEBI" id="CHEBI:29101"/>
    </ligand>
</feature>
<feature type="binding site" evidence="1">
    <location>
        <position position="167"/>
    </location>
    <ligand>
        <name>Na(+)</name>
        <dbReference type="ChEBI" id="CHEBI:29101"/>
    </ligand>
</feature>
<protein>
    <recommendedName>
        <fullName evidence="1">ATP-dependent protease subunit HslV</fullName>
        <ecNumber evidence="1">3.4.25.2</ecNumber>
    </recommendedName>
</protein>
<organism>
    <name type="scientific">Campylobacter lari (strain RM2100 / D67 / ATCC BAA-1060)</name>
    <dbReference type="NCBI Taxonomy" id="306263"/>
    <lineage>
        <taxon>Bacteria</taxon>
        <taxon>Pseudomonadati</taxon>
        <taxon>Campylobacterota</taxon>
        <taxon>Epsilonproteobacteria</taxon>
        <taxon>Campylobacterales</taxon>
        <taxon>Campylobacteraceae</taxon>
        <taxon>Campylobacter</taxon>
    </lineage>
</organism>